<gene>
    <name evidence="2" type="primary">Mocs2</name>
</gene>
<reference key="1">
    <citation type="journal article" date="2004" name="Genome Res.">
        <title>The status, quality, and expansion of the NIH full-length cDNA project: the Mammalian Gene Collection (MGC).</title>
        <authorList>
            <consortium name="The MGC Project Team"/>
        </authorList>
    </citation>
    <scope>NUCLEOTIDE SEQUENCE [LARGE SCALE MRNA]</scope>
    <source>
        <tissue>Kidney</tissue>
    </source>
</reference>
<feature type="chain" id="PRO_0000369327" description="Molybdopterin synthase catalytic subunit">
    <location>
        <begin position="1"/>
        <end position="200"/>
    </location>
</feature>
<feature type="region of interest" description="Disordered" evidence="3">
    <location>
        <begin position="16"/>
        <end position="43"/>
    </location>
</feature>
<feature type="compositionally biased region" description="Polar residues" evidence="3">
    <location>
        <begin position="16"/>
        <end position="30"/>
    </location>
</feature>
<feature type="binding site" evidence="2">
    <location>
        <begin position="154"/>
        <end position="155"/>
    </location>
    <ligand>
        <name>substrate</name>
    </ligand>
</feature>
<feature type="binding site" evidence="2">
    <location>
        <position position="170"/>
    </location>
    <ligand>
        <name>substrate</name>
    </ligand>
</feature>
<feature type="binding site" evidence="2">
    <location>
        <begin position="177"/>
        <end position="179"/>
    </location>
    <ligand>
        <name>substrate</name>
    </ligand>
</feature>
<feature type="modified residue" description="Phosphoserine" evidence="1">
    <location>
        <position position="20"/>
    </location>
</feature>
<accession>Q6AY59</accession>
<comment type="function">
    <text evidence="2">Catalytic subunit of the molybdopterin synthase complex, a complex that catalyzes the conversion of precursor Z into molybdopterin. Acts by mediating the incorporation of 2 sulfur atoms from thiocarboxylated MOCS2A into precursor Z to generate a dithiolene group.</text>
</comment>
<comment type="catalytic activity">
    <reaction evidence="2">
        <text>2 [molybdopterin-synthase sulfur-carrier protein]-C-terminal-Gly-aminoethanethioate + cyclic pyranopterin phosphate + H2O = molybdopterin + 2 [molybdopterin-synthase sulfur-carrier protein]-C-terminal Gly-Gly + 2 H(+)</text>
        <dbReference type="Rhea" id="RHEA:26333"/>
        <dbReference type="Rhea" id="RHEA-COMP:12202"/>
        <dbReference type="Rhea" id="RHEA-COMP:19907"/>
        <dbReference type="ChEBI" id="CHEBI:15377"/>
        <dbReference type="ChEBI" id="CHEBI:15378"/>
        <dbReference type="ChEBI" id="CHEBI:58698"/>
        <dbReference type="ChEBI" id="CHEBI:59648"/>
        <dbReference type="ChEBI" id="CHEBI:90778"/>
        <dbReference type="ChEBI" id="CHEBI:232372"/>
        <dbReference type="EC" id="2.8.1.12"/>
    </reaction>
</comment>
<comment type="pathway">
    <text evidence="2">Cofactor biosynthesis; molybdopterin biosynthesis.</text>
</comment>
<comment type="subunit">
    <text evidence="2">Heterotetramer; composed of 2 small (MOCS2A) and 2 large (MOCS2B) subunits.</text>
</comment>
<comment type="subcellular location">
    <subcellularLocation>
        <location evidence="2">Cytoplasm</location>
        <location evidence="2">Cytosol</location>
    </subcellularLocation>
</comment>
<comment type="miscellaneous">
    <text>This protein is produced by a bicistronic gene which also produces the small subunit (MOCS2A) from an overlapping reading frame.</text>
</comment>
<comment type="similarity">
    <text evidence="2">Belongs to the MoaE family. MOCS2B subfamily.</text>
</comment>
<protein>
    <recommendedName>
        <fullName evidence="2">Molybdopterin synthase catalytic subunit</fullName>
        <ecNumber evidence="2">2.8.1.12</ecNumber>
    </recommendedName>
    <alternativeName>
        <fullName evidence="2">Molybdenum cofactor synthesis protein 2 large subunit</fullName>
    </alternativeName>
    <alternativeName>
        <fullName evidence="2">Molybdenum cofactor synthesis protein 2B</fullName>
        <shortName evidence="2">MOCS2B</shortName>
    </alternativeName>
</protein>
<organism>
    <name type="scientific">Rattus norvegicus</name>
    <name type="common">Rat</name>
    <dbReference type="NCBI Taxonomy" id="10116"/>
    <lineage>
        <taxon>Eukaryota</taxon>
        <taxon>Metazoa</taxon>
        <taxon>Chordata</taxon>
        <taxon>Craniata</taxon>
        <taxon>Vertebrata</taxon>
        <taxon>Euteleostomi</taxon>
        <taxon>Mammalia</taxon>
        <taxon>Eutheria</taxon>
        <taxon>Euarchontoglires</taxon>
        <taxon>Glires</taxon>
        <taxon>Rodentia</taxon>
        <taxon>Myomorpha</taxon>
        <taxon>Muroidea</taxon>
        <taxon>Muridae</taxon>
        <taxon>Murinae</taxon>
        <taxon>Rattus</taxon>
    </lineage>
</organism>
<evidence type="ECO:0000250" key="1">
    <source>
        <dbReference type="UniProtKB" id="O96007"/>
    </source>
</evidence>
<evidence type="ECO:0000255" key="2">
    <source>
        <dbReference type="HAMAP-Rule" id="MF_03052"/>
    </source>
</evidence>
<evidence type="ECO:0000256" key="3">
    <source>
        <dbReference type="SAM" id="MobiDB-lite"/>
    </source>
</evidence>
<proteinExistence type="evidence at transcript level"/>
<keyword id="KW-0963">Cytoplasm</keyword>
<keyword id="KW-0501">Molybdenum cofactor biosynthesis</keyword>
<keyword id="KW-0597">Phosphoprotein</keyword>
<keyword id="KW-1185">Reference proteome</keyword>
<keyword id="KW-0808">Transferase</keyword>
<name>MOC2B_RAT</name>
<sequence length="200" mass="22233">MSSLEINNSCFSLETKLPSSHQSVEDSASEPSGYEAKDPPQDTLKDVDDVLEKPKDIIQFTAKKLSVGEVSQLVVSPLCGAVSLFVGTTRNNFEGKKVISLEYEAYLPMAENEIRKICNDIRQKWPVRHIAVFHRLGLVPVSEASTVIAVSSAHRAASLEAVSYAIDSLKAKVPIWKKEIYEESTSSWKRNKECFWAADD</sequence>
<dbReference type="EC" id="2.8.1.12" evidence="2"/>
<dbReference type="EMBL" id="BC079181">
    <property type="protein sequence ID" value="AAH79181.1"/>
    <property type="molecule type" value="mRNA"/>
</dbReference>
<dbReference type="RefSeq" id="NP_001007634.1">
    <property type="nucleotide sequence ID" value="NM_001007633.2"/>
</dbReference>
<dbReference type="RefSeq" id="NP_001155885.1">
    <property type="nucleotide sequence ID" value="NM_001162413.1"/>
</dbReference>
<dbReference type="RefSeq" id="XP_017446205.1">
    <property type="nucleotide sequence ID" value="XM_017590716.1"/>
</dbReference>
<dbReference type="SMR" id="Q6AY59"/>
<dbReference type="FunCoup" id="Q6AY59">
    <property type="interactions" value="541"/>
</dbReference>
<dbReference type="STRING" id="10116.ENSRNOP00000073722"/>
<dbReference type="PhosphoSitePlus" id="Q6AY59"/>
<dbReference type="PaxDb" id="10116-ENSRNOP00000015781"/>
<dbReference type="Ensembl" id="ENSRNOT00000082990.2">
    <property type="protein sequence ID" value="ENSRNOP00000073722.1"/>
    <property type="gene ID" value="ENSRNOG00000056325.2"/>
</dbReference>
<dbReference type="GeneID" id="294753"/>
<dbReference type="KEGG" id="rno:294753"/>
<dbReference type="AGR" id="RGD:1359477"/>
<dbReference type="CTD" id="4338"/>
<dbReference type="RGD" id="1359477">
    <property type="gene designation" value="Mocs2"/>
</dbReference>
<dbReference type="eggNOG" id="KOG3307">
    <property type="taxonomic scope" value="Eukaryota"/>
</dbReference>
<dbReference type="GeneTree" id="ENSGT00510000047669"/>
<dbReference type="HOGENOM" id="CLU_089568_0_1_1"/>
<dbReference type="InParanoid" id="Q6AY59"/>
<dbReference type="OMA" id="WKHQFFA"/>
<dbReference type="OrthoDB" id="5531344at2759"/>
<dbReference type="PhylomeDB" id="Q6AY59"/>
<dbReference type="TreeFam" id="TF314334"/>
<dbReference type="UniPathway" id="UPA00344"/>
<dbReference type="Proteomes" id="UP000002494">
    <property type="component" value="Chromosome 2"/>
</dbReference>
<dbReference type="Bgee" id="ENSRNOG00000056325">
    <property type="expression patterns" value="Expressed in quadriceps femoris and 20 other cell types or tissues"/>
</dbReference>
<dbReference type="GO" id="GO:0005829">
    <property type="term" value="C:cytosol"/>
    <property type="evidence" value="ECO:0000250"/>
    <property type="project" value="UniProtKB"/>
</dbReference>
<dbReference type="GO" id="GO:1990140">
    <property type="term" value="C:molybdopterin synthase complex"/>
    <property type="evidence" value="ECO:0000250"/>
    <property type="project" value="UniProtKB"/>
</dbReference>
<dbReference type="GO" id="GO:0016607">
    <property type="term" value="C:nuclear speck"/>
    <property type="evidence" value="ECO:0007669"/>
    <property type="project" value="Ensembl"/>
</dbReference>
<dbReference type="GO" id="GO:0042802">
    <property type="term" value="F:identical protein binding"/>
    <property type="evidence" value="ECO:0000266"/>
    <property type="project" value="RGD"/>
</dbReference>
<dbReference type="GO" id="GO:0030366">
    <property type="term" value="F:molybdopterin synthase activity"/>
    <property type="evidence" value="ECO:0007669"/>
    <property type="project" value="UniProtKB-UniRule"/>
</dbReference>
<dbReference type="GO" id="GO:0006777">
    <property type="term" value="P:Mo-molybdopterin cofactor biosynthetic process"/>
    <property type="evidence" value="ECO:0000250"/>
    <property type="project" value="UniProtKB"/>
</dbReference>
<dbReference type="GO" id="GO:0032324">
    <property type="term" value="P:molybdopterin cofactor biosynthetic process"/>
    <property type="evidence" value="ECO:0000266"/>
    <property type="project" value="RGD"/>
</dbReference>
<dbReference type="CDD" id="cd00756">
    <property type="entry name" value="MoaE"/>
    <property type="match status" value="1"/>
</dbReference>
<dbReference type="FunFam" id="3.90.1170.40:FF:000002">
    <property type="entry name" value="Molybdopterin synthase catalytic subunit"/>
    <property type="match status" value="1"/>
</dbReference>
<dbReference type="Gene3D" id="3.90.1170.40">
    <property type="entry name" value="Molybdopterin biosynthesis MoaE subunit"/>
    <property type="match status" value="1"/>
</dbReference>
<dbReference type="HAMAP" id="MF_03052">
    <property type="entry name" value="MOC2B"/>
    <property type="match status" value="1"/>
</dbReference>
<dbReference type="InterPro" id="IPR036563">
    <property type="entry name" value="MoaE_sf"/>
</dbReference>
<dbReference type="InterPro" id="IPR028888">
    <property type="entry name" value="MOCS2B_euk"/>
</dbReference>
<dbReference type="InterPro" id="IPR003448">
    <property type="entry name" value="Mopterin_biosynth_MoaE"/>
</dbReference>
<dbReference type="PANTHER" id="PTHR23404">
    <property type="entry name" value="MOLYBDOPTERIN SYNTHASE RELATED"/>
    <property type="match status" value="1"/>
</dbReference>
<dbReference type="Pfam" id="PF02391">
    <property type="entry name" value="MoaE"/>
    <property type="match status" value="1"/>
</dbReference>
<dbReference type="SUPFAM" id="SSF54690">
    <property type="entry name" value="Molybdopterin synthase subunit MoaE"/>
    <property type="match status" value="1"/>
</dbReference>